<name>METXA_NOSP7</name>
<comment type="function">
    <text evidence="1">Transfers an acetyl group from acetyl-CoA to L-homoserine, forming acetyl-L-homoserine.</text>
</comment>
<comment type="catalytic activity">
    <reaction evidence="1">
        <text>L-homoserine + acetyl-CoA = O-acetyl-L-homoserine + CoA</text>
        <dbReference type="Rhea" id="RHEA:13701"/>
        <dbReference type="ChEBI" id="CHEBI:57287"/>
        <dbReference type="ChEBI" id="CHEBI:57288"/>
        <dbReference type="ChEBI" id="CHEBI:57476"/>
        <dbReference type="ChEBI" id="CHEBI:57716"/>
        <dbReference type="EC" id="2.3.1.31"/>
    </reaction>
</comment>
<comment type="pathway">
    <text evidence="1">Amino-acid biosynthesis; L-methionine biosynthesis via de novo pathway; O-acetyl-L-homoserine from L-homoserine: step 1/1.</text>
</comment>
<comment type="subunit">
    <text evidence="1">Homodimer.</text>
</comment>
<comment type="subcellular location">
    <subcellularLocation>
        <location evidence="1">Cytoplasm</location>
    </subcellularLocation>
</comment>
<comment type="similarity">
    <text evidence="1">Belongs to the AB hydrolase superfamily. MetX family.</text>
</comment>
<proteinExistence type="inferred from homology"/>
<reference key="1">
    <citation type="journal article" date="2013" name="Plant Physiol.">
        <title>A Nostoc punctiforme Sugar Transporter Necessary to Establish a Cyanobacterium-Plant Symbiosis.</title>
        <authorList>
            <person name="Ekman M."/>
            <person name="Picossi S."/>
            <person name="Campbell E.L."/>
            <person name="Meeks J.C."/>
            <person name="Flores E."/>
        </authorList>
    </citation>
    <scope>NUCLEOTIDE SEQUENCE [LARGE SCALE GENOMIC DNA]</scope>
    <source>
        <strain>ATCC 29133 / PCC 73102</strain>
    </source>
</reference>
<feature type="chain" id="PRO_1000115232" description="Homoserine O-acetyltransferase">
    <location>
        <begin position="1"/>
        <end position="356"/>
    </location>
</feature>
<feature type="domain" description="AB hydrolase-1" evidence="1">
    <location>
        <begin position="49"/>
        <end position="337"/>
    </location>
</feature>
<feature type="active site" description="Nucleophile" evidence="1">
    <location>
        <position position="143"/>
    </location>
</feature>
<feature type="active site" evidence="1">
    <location>
        <position position="304"/>
    </location>
</feature>
<feature type="active site" evidence="1">
    <location>
        <position position="333"/>
    </location>
</feature>
<feature type="binding site" evidence="1">
    <location>
        <position position="212"/>
    </location>
    <ligand>
        <name>substrate</name>
    </ligand>
</feature>
<feature type="binding site" evidence="1">
    <location>
        <position position="334"/>
    </location>
    <ligand>
        <name>substrate</name>
    </ligand>
</feature>
<sequence length="356" mass="39553">MIYSDFISPQTQFYQLTVPFQLESGKVLIGVQVAYRSWGELNAQGDNGVLICHALTGSADADDWWEPLFGSGKAFNPDRDFIVCSNILGSCYGTTGPTTINPTTRKPYGVSFPKITIRDMVRLQAVLLEYLGVQSLRFVIGGSLGGMQSLEWALLYPDKVKSIAPIAVSGRHSAWCIGLSEAQRQAIYADPNWQGGNYTLDAPPNQGLAVARMMAMSTYRSWDSFTTRFGRQYDPSEKFAIASYLQHQGQKLTERFDANTYIILTHAMDGHDIARDRTAPNLSDYESVLGSIQQPTLVVAIDSDILYPPVEQQELANLIPNAQLSWLKSTHGHDAFLIDMAALNEIIQQNHEFVLF</sequence>
<protein>
    <recommendedName>
        <fullName evidence="1">Homoserine O-acetyltransferase</fullName>
        <shortName evidence="1">HAT</shortName>
        <ecNumber evidence="1">2.3.1.31</ecNumber>
    </recommendedName>
    <alternativeName>
        <fullName evidence="1">Homoserine transacetylase</fullName>
        <shortName evidence="1">HTA</shortName>
    </alternativeName>
</protein>
<organism>
    <name type="scientific">Nostoc punctiforme (strain ATCC 29133 / PCC 73102)</name>
    <dbReference type="NCBI Taxonomy" id="63737"/>
    <lineage>
        <taxon>Bacteria</taxon>
        <taxon>Bacillati</taxon>
        <taxon>Cyanobacteriota</taxon>
        <taxon>Cyanophyceae</taxon>
        <taxon>Nostocales</taxon>
        <taxon>Nostocaceae</taxon>
        <taxon>Nostoc</taxon>
    </lineage>
</organism>
<gene>
    <name evidence="1" type="primary">metXA</name>
    <name type="ordered locus">Npun_R6426</name>
</gene>
<evidence type="ECO:0000255" key="1">
    <source>
        <dbReference type="HAMAP-Rule" id="MF_00296"/>
    </source>
</evidence>
<accession>B2IY96</accession>
<dbReference type="EC" id="2.3.1.31" evidence="1"/>
<dbReference type="EMBL" id="CP001037">
    <property type="protein sequence ID" value="ACC84695.1"/>
    <property type="molecule type" value="Genomic_DNA"/>
</dbReference>
<dbReference type="RefSeq" id="WP_012412633.1">
    <property type="nucleotide sequence ID" value="NC_010628.1"/>
</dbReference>
<dbReference type="SMR" id="B2IY96"/>
<dbReference type="STRING" id="63737.Npun_R6426"/>
<dbReference type="ESTHER" id="nosp7-metx">
    <property type="family name" value="Homoserine_transacetylase"/>
</dbReference>
<dbReference type="EnsemblBacteria" id="ACC84695">
    <property type="protein sequence ID" value="ACC84695"/>
    <property type="gene ID" value="Npun_R6426"/>
</dbReference>
<dbReference type="KEGG" id="npu:Npun_R6426"/>
<dbReference type="eggNOG" id="COG2021">
    <property type="taxonomic scope" value="Bacteria"/>
</dbReference>
<dbReference type="HOGENOM" id="CLU_028760_1_2_3"/>
<dbReference type="OrthoDB" id="9800754at2"/>
<dbReference type="PhylomeDB" id="B2IY96"/>
<dbReference type="UniPathway" id="UPA00051">
    <property type="reaction ID" value="UER00074"/>
</dbReference>
<dbReference type="Proteomes" id="UP000001191">
    <property type="component" value="Chromosome"/>
</dbReference>
<dbReference type="GO" id="GO:0005737">
    <property type="term" value="C:cytoplasm"/>
    <property type="evidence" value="ECO:0007669"/>
    <property type="project" value="UniProtKB-SubCell"/>
</dbReference>
<dbReference type="GO" id="GO:0004414">
    <property type="term" value="F:homoserine O-acetyltransferase activity"/>
    <property type="evidence" value="ECO:0007669"/>
    <property type="project" value="UniProtKB-UniRule"/>
</dbReference>
<dbReference type="GO" id="GO:0009092">
    <property type="term" value="P:homoserine metabolic process"/>
    <property type="evidence" value="ECO:0007669"/>
    <property type="project" value="TreeGrafter"/>
</dbReference>
<dbReference type="GO" id="GO:0009086">
    <property type="term" value="P:methionine biosynthetic process"/>
    <property type="evidence" value="ECO:0007669"/>
    <property type="project" value="UniProtKB-UniRule"/>
</dbReference>
<dbReference type="Gene3D" id="3.40.50.1820">
    <property type="entry name" value="alpha/beta hydrolase"/>
    <property type="match status" value="1"/>
</dbReference>
<dbReference type="HAMAP" id="MF_00296">
    <property type="entry name" value="MetX_acyltransf"/>
    <property type="match status" value="1"/>
</dbReference>
<dbReference type="InterPro" id="IPR000073">
    <property type="entry name" value="AB_hydrolase_1"/>
</dbReference>
<dbReference type="InterPro" id="IPR029058">
    <property type="entry name" value="AB_hydrolase_fold"/>
</dbReference>
<dbReference type="InterPro" id="IPR008220">
    <property type="entry name" value="HAT_MetX-like"/>
</dbReference>
<dbReference type="NCBIfam" id="TIGR01392">
    <property type="entry name" value="homoserO_Ac_trn"/>
    <property type="match status" value="1"/>
</dbReference>
<dbReference type="NCBIfam" id="NF001209">
    <property type="entry name" value="PRK00175.1"/>
    <property type="match status" value="1"/>
</dbReference>
<dbReference type="PANTHER" id="PTHR32268">
    <property type="entry name" value="HOMOSERINE O-ACETYLTRANSFERASE"/>
    <property type="match status" value="1"/>
</dbReference>
<dbReference type="PANTHER" id="PTHR32268:SF11">
    <property type="entry name" value="HOMOSERINE O-ACETYLTRANSFERASE"/>
    <property type="match status" value="1"/>
</dbReference>
<dbReference type="Pfam" id="PF00561">
    <property type="entry name" value="Abhydrolase_1"/>
    <property type="match status" value="1"/>
</dbReference>
<dbReference type="PIRSF" id="PIRSF000443">
    <property type="entry name" value="Homoser_Ac_trans"/>
    <property type="match status" value="1"/>
</dbReference>
<dbReference type="SUPFAM" id="SSF53474">
    <property type="entry name" value="alpha/beta-Hydrolases"/>
    <property type="match status" value="1"/>
</dbReference>
<keyword id="KW-0012">Acyltransferase</keyword>
<keyword id="KW-0028">Amino-acid biosynthesis</keyword>
<keyword id="KW-0963">Cytoplasm</keyword>
<keyword id="KW-0486">Methionine biosynthesis</keyword>
<keyword id="KW-1185">Reference proteome</keyword>
<keyword id="KW-0808">Transferase</keyword>